<keyword id="KW-0066">ATP synthesis</keyword>
<keyword id="KW-1003">Cell membrane</keyword>
<keyword id="KW-0139">CF(1)</keyword>
<keyword id="KW-0375">Hydrogen ion transport</keyword>
<keyword id="KW-0406">Ion transport</keyword>
<keyword id="KW-0472">Membrane</keyword>
<keyword id="KW-0813">Transport</keyword>
<organism>
    <name type="scientific">Clostridium perfringens (strain ATCC 13124 / DSM 756 / JCM 1290 / NCIMB 6125 / NCTC 8237 / Type A)</name>
    <dbReference type="NCBI Taxonomy" id="195103"/>
    <lineage>
        <taxon>Bacteria</taxon>
        <taxon>Bacillati</taxon>
        <taxon>Bacillota</taxon>
        <taxon>Clostridia</taxon>
        <taxon>Eubacteriales</taxon>
        <taxon>Clostridiaceae</taxon>
        <taxon>Clostridium</taxon>
    </lineage>
</organism>
<reference key="1">
    <citation type="journal article" date="2006" name="Genome Res.">
        <title>Skewed genomic variability in strains of the toxigenic bacterial pathogen, Clostridium perfringens.</title>
        <authorList>
            <person name="Myers G.S.A."/>
            <person name="Rasko D.A."/>
            <person name="Cheung J.K."/>
            <person name="Ravel J."/>
            <person name="Seshadri R."/>
            <person name="DeBoy R.T."/>
            <person name="Ren Q."/>
            <person name="Varga J."/>
            <person name="Awad M.M."/>
            <person name="Brinkac L.M."/>
            <person name="Daugherty S.C."/>
            <person name="Haft D.H."/>
            <person name="Dodson R.J."/>
            <person name="Madupu R."/>
            <person name="Nelson W.C."/>
            <person name="Rosovitz M.J."/>
            <person name="Sullivan S.A."/>
            <person name="Khouri H."/>
            <person name="Dimitrov G.I."/>
            <person name="Watkins K.L."/>
            <person name="Mulligan S."/>
            <person name="Benton J."/>
            <person name="Radune D."/>
            <person name="Fisher D.J."/>
            <person name="Atkins H.S."/>
            <person name="Hiscox T."/>
            <person name="Jost B.H."/>
            <person name="Billington S.J."/>
            <person name="Songer J.G."/>
            <person name="McClane B.A."/>
            <person name="Titball R.W."/>
            <person name="Rood J.I."/>
            <person name="Melville S.B."/>
            <person name="Paulsen I.T."/>
        </authorList>
    </citation>
    <scope>NUCLEOTIDE SEQUENCE [LARGE SCALE GENOMIC DNA]</scope>
    <source>
        <strain>ATCC 13124 / DSM 756 / JCM 1290 / NCIMB 6125 / NCTC 8237 / S 107 / Type A</strain>
    </source>
</reference>
<sequence length="283" mass="31085">MAGAGLLEIKRRIKSIKNTRKITKAMGLVATSKLRKARQKLTENNQYFSSLDEIARELIGSLNSNNNPLLKPNDNPKKLIILLASDSGLCGGFNGNTAAFVRDNYENNLENIEAVVVGKKGIHYVKKNKISTLAEYVDLGDTPNVGDASTIVNKAVKEFTDGNFGEVSLVYTKFFSPVKQEVVEEKLLPLDLTGEKGKVSFLIEPDEDEIIDSLVSSYLKGKFMNAMFNSKASEQSARMQAMDGATKNADDLLNSLDAKYNRIRQSIITQEISEIVGGAEAQK</sequence>
<evidence type="ECO:0000255" key="1">
    <source>
        <dbReference type="HAMAP-Rule" id="MF_00815"/>
    </source>
</evidence>
<proteinExistence type="inferred from homology"/>
<accession>Q0TNC3</accession>
<name>ATPG_CLOP1</name>
<comment type="function">
    <text evidence="1">Produces ATP from ADP in the presence of a proton gradient across the membrane. The gamma chain is believed to be important in regulating ATPase activity and the flow of protons through the CF(0) complex.</text>
</comment>
<comment type="subunit">
    <text evidence="1">F-type ATPases have 2 components, CF(1) - the catalytic core - and CF(0) - the membrane proton channel. CF(1) has five subunits: alpha(3), beta(3), gamma(1), delta(1), epsilon(1). CF(0) has three main subunits: a, b and c.</text>
</comment>
<comment type="subcellular location">
    <subcellularLocation>
        <location evidence="1">Cell membrane</location>
        <topology evidence="1">Peripheral membrane protein</topology>
    </subcellularLocation>
</comment>
<comment type="similarity">
    <text evidence="1">Belongs to the ATPase gamma chain family.</text>
</comment>
<protein>
    <recommendedName>
        <fullName evidence="1">ATP synthase gamma chain</fullName>
    </recommendedName>
    <alternativeName>
        <fullName evidence="1">ATP synthase F1 sector gamma subunit</fullName>
    </alternativeName>
    <alternativeName>
        <fullName evidence="1">F-ATPase gamma subunit</fullName>
    </alternativeName>
</protein>
<gene>
    <name evidence="1" type="primary">atpG</name>
    <name type="ordered locus">CPF_2453</name>
</gene>
<dbReference type="EMBL" id="CP000246">
    <property type="protein sequence ID" value="ABG83750.1"/>
    <property type="molecule type" value="Genomic_DNA"/>
</dbReference>
<dbReference type="RefSeq" id="WP_003452288.1">
    <property type="nucleotide sequence ID" value="NC_008261.1"/>
</dbReference>
<dbReference type="SMR" id="Q0TNC3"/>
<dbReference type="STRING" id="195103.CPF_2453"/>
<dbReference type="PaxDb" id="195103-CPF_2453"/>
<dbReference type="GeneID" id="93001269"/>
<dbReference type="KEGG" id="cpf:CPF_2453"/>
<dbReference type="eggNOG" id="COG0224">
    <property type="taxonomic scope" value="Bacteria"/>
</dbReference>
<dbReference type="HOGENOM" id="CLU_050669_0_1_9"/>
<dbReference type="Proteomes" id="UP000001823">
    <property type="component" value="Chromosome"/>
</dbReference>
<dbReference type="GO" id="GO:0005886">
    <property type="term" value="C:plasma membrane"/>
    <property type="evidence" value="ECO:0007669"/>
    <property type="project" value="UniProtKB-SubCell"/>
</dbReference>
<dbReference type="GO" id="GO:0045259">
    <property type="term" value="C:proton-transporting ATP synthase complex"/>
    <property type="evidence" value="ECO:0007669"/>
    <property type="project" value="UniProtKB-KW"/>
</dbReference>
<dbReference type="GO" id="GO:0005524">
    <property type="term" value="F:ATP binding"/>
    <property type="evidence" value="ECO:0007669"/>
    <property type="project" value="UniProtKB-UniRule"/>
</dbReference>
<dbReference type="GO" id="GO:0046933">
    <property type="term" value="F:proton-transporting ATP synthase activity, rotational mechanism"/>
    <property type="evidence" value="ECO:0007669"/>
    <property type="project" value="UniProtKB-UniRule"/>
</dbReference>
<dbReference type="GO" id="GO:0042777">
    <property type="term" value="P:proton motive force-driven plasma membrane ATP synthesis"/>
    <property type="evidence" value="ECO:0007669"/>
    <property type="project" value="UniProtKB-UniRule"/>
</dbReference>
<dbReference type="CDD" id="cd12151">
    <property type="entry name" value="F1-ATPase_gamma"/>
    <property type="match status" value="1"/>
</dbReference>
<dbReference type="Gene3D" id="3.40.1380.10">
    <property type="match status" value="1"/>
</dbReference>
<dbReference type="Gene3D" id="1.10.287.80">
    <property type="entry name" value="ATP synthase, gamma subunit, helix hairpin domain"/>
    <property type="match status" value="1"/>
</dbReference>
<dbReference type="HAMAP" id="MF_00815">
    <property type="entry name" value="ATP_synth_gamma_bact"/>
    <property type="match status" value="1"/>
</dbReference>
<dbReference type="InterPro" id="IPR035968">
    <property type="entry name" value="ATP_synth_F1_ATPase_gsu"/>
</dbReference>
<dbReference type="InterPro" id="IPR000131">
    <property type="entry name" value="ATP_synth_F1_gsu"/>
</dbReference>
<dbReference type="InterPro" id="IPR023632">
    <property type="entry name" value="ATP_synth_F1_gsu_CS"/>
</dbReference>
<dbReference type="NCBIfam" id="TIGR01146">
    <property type="entry name" value="ATPsyn_F1gamma"/>
    <property type="match status" value="1"/>
</dbReference>
<dbReference type="PANTHER" id="PTHR11693">
    <property type="entry name" value="ATP SYNTHASE GAMMA CHAIN"/>
    <property type="match status" value="1"/>
</dbReference>
<dbReference type="PANTHER" id="PTHR11693:SF22">
    <property type="entry name" value="ATP SYNTHASE SUBUNIT GAMMA, MITOCHONDRIAL"/>
    <property type="match status" value="1"/>
</dbReference>
<dbReference type="Pfam" id="PF00231">
    <property type="entry name" value="ATP-synt"/>
    <property type="match status" value="1"/>
</dbReference>
<dbReference type="PRINTS" id="PR00126">
    <property type="entry name" value="ATPASEGAMMA"/>
</dbReference>
<dbReference type="SUPFAM" id="SSF52943">
    <property type="entry name" value="ATP synthase (F1-ATPase), gamma subunit"/>
    <property type="match status" value="1"/>
</dbReference>
<dbReference type="PROSITE" id="PS00153">
    <property type="entry name" value="ATPASE_GAMMA"/>
    <property type="match status" value="1"/>
</dbReference>
<feature type="chain" id="PRO_1000053195" description="ATP synthase gamma chain">
    <location>
        <begin position="1"/>
        <end position="283"/>
    </location>
</feature>